<reference key="1">
    <citation type="journal article" date="2008" name="J. Bacteriol.">
        <title>Genome sequence of a nephritogenic and highly transformable M49 strain of Streptococcus pyogenes.</title>
        <authorList>
            <person name="McShan W.M."/>
            <person name="Ferretti J.J."/>
            <person name="Karasawa T."/>
            <person name="Suvorov A.N."/>
            <person name="Lin S."/>
            <person name="Qin B."/>
            <person name="Jia H."/>
            <person name="Kenton S."/>
            <person name="Najar F."/>
            <person name="Wu H."/>
            <person name="Scott J."/>
            <person name="Roe B.A."/>
            <person name="Savic D.J."/>
        </authorList>
    </citation>
    <scope>NUCLEOTIDE SEQUENCE [LARGE SCALE GENOMIC DNA]</scope>
    <source>
        <strain>NZ131</strain>
    </source>
</reference>
<evidence type="ECO:0000255" key="1">
    <source>
        <dbReference type="HAMAP-Rule" id="MF_00046"/>
    </source>
</evidence>
<sequence>MSKTYHFIGIKGSGMSALALMLHQMGHKVQGSDVEKYYFTQRGLEQAGITILPFSEDNITPDMELIVGNAFRENNKEVAYALRHQIPFKRYHDFLGDFMKSFISFAVAGAHGKTSTTGLLSHVLKNITDTSYLIGDGTGRGSANAQYFVFESDEYERHFMPYHPEYSIITNIDFDHPDYFTGIADVRNAFNDYAKQVKKALFVYGEDDELKKIEAPAPIYYYGFEEGNDFIAYDITRTTNGSDFKVKHQGEVIGQFHVPAYGKHNILNATAVIANLFVAGIDMALVADHLKTFSGVKRRFTEKIINDTIIIDDFAHHPTEIVATIDAARQKYPSKEIVAIFQPHTFTRTIALLEDFACALNEADSVYLAQIYGSAREVDKGEVKVEDLAAKIIKPSQVVTVENVSPLLDHDNAVYVFMGAGDIQLYEHSFEELLANLTKNNQ</sequence>
<dbReference type="EC" id="6.3.2.8" evidence="1"/>
<dbReference type="EMBL" id="CP000829">
    <property type="protein sequence ID" value="ACI60625.1"/>
    <property type="molecule type" value="Genomic_DNA"/>
</dbReference>
<dbReference type="SMR" id="B5XJW3"/>
<dbReference type="KEGG" id="soz:Spy49_0287"/>
<dbReference type="HOGENOM" id="CLU_028104_1_0_9"/>
<dbReference type="UniPathway" id="UPA00219"/>
<dbReference type="Proteomes" id="UP000001039">
    <property type="component" value="Chromosome"/>
</dbReference>
<dbReference type="GO" id="GO:0005737">
    <property type="term" value="C:cytoplasm"/>
    <property type="evidence" value="ECO:0007669"/>
    <property type="project" value="UniProtKB-SubCell"/>
</dbReference>
<dbReference type="GO" id="GO:0005524">
    <property type="term" value="F:ATP binding"/>
    <property type="evidence" value="ECO:0007669"/>
    <property type="project" value="UniProtKB-UniRule"/>
</dbReference>
<dbReference type="GO" id="GO:0008763">
    <property type="term" value="F:UDP-N-acetylmuramate-L-alanine ligase activity"/>
    <property type="evidence" value="ECO:0007669"/>
    <property type="project" value="UniProtKB-UniRule"/>
</dbReference>
<dbReference type="GO" id="GO:0051301">
    <property type="term" value="P:cell division"/>
    <property type="evidence" value="ECO:0007669"/>
    <property type="project" value="UniProtKB-KW"/>
</dbReference>
<dbReference type="GO" id="GO:0071555">
    <property type="term" value="P:cell wall organization"/>
    <property type="evidence" value="ECO:0007669"/>
    <property type="project" value="UniProtKB-KW"/>
</dbReference>
<dbReference type="GO" id="GO:0009252">
    <property type="term" value="P:peptidoglycan biosynthetic process"/>
    <property type="evidence" value="ECO:0007669"/>
    <property type="project" value="UniProtKB-UniRule"/>
</dbReference>
<dbReference type="GO" id="GO:0008360">
    <property type="term" value="P:regulation of cell shape"/>
    <property type="evidence" value="ECO:0007669"/>
    <property type="project" value="UniProtKB-KW"/>
</dbReference>
<dbReference type="Gene3D" id="3.90.190.20">
    <property type="entry name" value="Mur ligase, C-terminal domain"/>
    <property type="match status" value="1"/>
</dbReference>
<dbReference type="Gene3D" id="3.40.1190.10">
    <property type="entry name" value="Mur-like, catalytic domain"/>
    <property type="match status" value="1"/>
</dbReference>
<dbReference type="Gene3D" id="3.40.50.720">
    <property type="entry name" value="NAD(P)-binding Rossmann-like Domain"/>
    <property type="match status" value="1"/>
</dbReference>
<dbReference type="HAMAP" id="MF_00046">
    <property type="entry name" value="MurC"/>
    <property type="match status" value="1"/>
</dbReference>
<dbReference type="InterPro" id="IPR036565">
    <property type="entry name" value="Mur-like_cat_sf"/>
</dbReference>
<dbReference type="InterPro" id="IPR004101">
    <property type="entry name" value="Mur_ligase_C"/>
</dbReference>
<dbReference type="InterPro" id="IPR036615">
    <property type="entry name" value="Mur_ligase_C_dom_sf"/>
</dbReference>
<dbReference type="InterPro" id="IPR013221">
    <property type="entry name" value="Mur_ligase_cen"/>
</dbReference>
<dbReference type="InterPro" id="IPR000713">
    <property type="entry name" value="Mur_ligase_N"/>
</dbReference>
<dbReference type="InterPro" id="IPR050061">
    <property type="entry name" value="MurCDEF_pg_biosynth"/>
</dbReference>
<dbReference type="InterPro" id="IPR005758">
    <property type="entry name" value="UDP-N-AcMur_Ala_ligase_MurC"/>
</dbReference>
<dbReference type="NCBIfam" id="TIGR01082">
    <property type="entry name" value="murC"/>
    <property type="match status" value="1"/>
</dbReference>
<dbReference type="PANTHER" id="PTHR43445:SF3">
    <property type="entry name" value="UDP-N-ACETYLMURAMATE--L-ALANINE LIGASE"/>
    <property type="match status" value="1"/>
</dbReference>
<dbReference type="PANTHER" id="PTHR43445">
    <property type="entry name" value="UDP-N-ACETYLMURAMATE--L-ALANINE LIGASE-RELATED"/>
    <property type="match status" value="1"/>
</dbReference>
<dbReference type="Pfam" id="PF01225">
    <property type="entry name" value="Mur_ligase"/>
    <property type="match status" value="1"/>
</dbReference>
<dbReference type="Pfam" id="PF02875">
    <property type="entry name" value="Mur_ligase_C"/>
    <property type="match status" value="1"/>
</dbReference>
<dbReference type="Pfam" id="PF08245">
    <property type="entry name" value="Mur_ligase_M"/>
    <property type="match status" value="1"/>
</dbReference>
<dbReference type="SUPFAM" id="SSF51984">
    <property type="entry name" value="MurCD N-terminal domain"/>
    <property type="match status" value="1"/>
</dbReference>
<dbReference type="SUPFAM" id="SSF53623">
    <property type="entry name" value="MurD-like peptide ligases, catalytic domain"/>
    <property type="match status" value="1"/>
</dbReference>
<dbReference type="SUPFAM" id="SSF53244">
    <property type="entry name" value="MurD-like peptide ligases, peptide-binding domain"/>
    <property type="match status" value="1"/>
</dbReference>
<proteinExistence type="inferred from homology"/>
<organism>
    <name type="scientific">Streptococcus pyogenes serotype M49 (strain NZ131)</name>
    <dbReference type="NCBI Taxonomy" id="471876"/>
    <lineage>
        <taxon>Bacteria</taxon>
        <taxon>Bacillati</taxon>
        <taxon>Bacillota</taxon>
        <taxon>Bacilli</taxon>
        <taxon>Lactobacillales</taxon>
        <taxon>Streptococcaceae</taxon>
        <taxon>Streptococcus</taxon>
    </lineage>
</organism>
<comment type="function">
    <text evidence="1">Cell wall formation.</text>
</comment>
<comment type="catalytic activity">
    <reaction evidence="1">
        <text>UDP-N-acetyl-alpha-D-muramate + L-alanine + ATP = UDP-N-acetyl-alpha-D-muramoyl-L-alanine + ADP + phosphate + H(+)</text>
        <dbReference type="Rhea" id="RHEA:23372"/>
        <dbReference type="ChEBI" id="CHEBI:15378"/>
        <dbReference type="ChEBI" id="CHEBI:30616"/>
        <dbReference type="ChEBI" id="CHEBI:43474"/>
        <dbReference type="ChEBI" id="CHEBI:57972"/>
        <dbReference type="ChEBI" id="CHEBI:70757"/>
        <dbReference type="ChEBI" id="CHEBI:83898"/>
        <dbReference type="ChEBI" id="CHEBI:456216"/>
        <dbReference type="EC" id="6.3.2.8"/>
    </reaction>
</comment>
<comment type="pathway">
    <text evidence="1">Cell wall biogenesis; peptidoglycan biosynthesis.</text>
</comment>
<comment type="subcellular location">
    <subcellularLocation>
        <location evidence="1">Cytoplasm</location>
    </subcellularLocation>
</comment>
<comment type="similarity">
    <text evidence="1">Belongs to the MurCDEF family.</text>
</comment>
<accession>B5XJW3</accession>
<name>MURC_STRPZ</name>
<feature type="chain" id="PRO_1000091145" description="UDP-N-acetylmuramate--L-alanine ligase">
    <location>
        <begin position="1"/>
        <end position="442"/>
    </location>
</feature>
<feature type="binding site" evidence="1">
    <location>
        <begin position="109"/>
        <end position="115"/>
    </location>
    <ligand>
        <name>ATP</name>
        <dbReference type="ChEBI" id="CHEBI:30616"/>
    </ligand>
</feature>
<keyword id="KW-0067">ATP-binding</keyword>
<keyword id="KW-0131">Cell cycle</keyword>
<keyword id="KW-0132">Cell division</keyword>
<keyword id="KW-0133">Cell shape</keyword>
<keyword id="KW-0961">Cell wall biogenesis/degradation</keyword>
<keyword id="KW-0963">Cytoplasm</keyword>
<keyword id="KW-0436">Ligase</keyword>
<keyword id="KW-0547">Nucleotide-binding</keyword>
<keyword id="KW-0573">Peptidoglycan synthesis</keyword>
<protein>
    <recommendedName>
        <fullName evidence="1">UDP-N-acetylmuramate--L-alanine ligase</fullName>
        <ecNumber evidence="1">6.3.2.8</ecNumber>
    </recommendedName>
    <alternativeName>
        <fullName evidence="1">UDP-N-acetylmuramoyl-L-alanine synthetase</fullName>
    </alternativeName>
</protein>
<gene>
    <name evidence="1" type="primary">murC</name>
    <name type="ordered locus">Spy49_0287</name>
</gene>